<sequence>MNEQYSALRSNVSMLGKVLGETIKDALGEHILERVETIRKLSKSSRAGNDANRQELLTTLQNLSNDELLPVARAFSQFLNLANTAEQYHSISPKGEAASNPEVIARTLRKLKNQPELSEDTIKKAVESLSLELVLTAHPTEITRRTLIHKMVEVNACLKQLDNKDIADYEHNQLMRRLRQLIAQSWHTDEIRKLRPSPVDEAKWGFAVVENSLWQGVPNYLRELNEQLEENLGYKLPVEFVPVRFTSWMGGDRDGNPNVTADITRHVLLLSRWKATDLFLKDIQVLVSELSMVEATPELLALVGEEGAAEPYRYLMKNLRSRLMATQAWLEARLKGEELPKPEGLLTQNEELWEPLYACYQSLQACGMGIIANGDLLDTLRRVKCFGVPLVRIDIRQESTRHTEALGELTRYLGIGDYESWSEADKQAFLIRELNSKRPLLPRNWQPSAETREVLDTCQVIAEAPQGSIAAYVISMAKTPSDVLAVHLLLKEAGIGFAMPVAPLFETLDDLNNANDVMTQLLNIDWYRGLIQGKQMVMIGYSDSAKDAGVMAASWAQYQAQDALIKTCEKAGIELTLFHGRGGSIGRGGAPAHAALLSQPPGSLKGGLRVTEQGEMIRFKYGLPEITVSSLSLYTGAILEANLLPPPEPKESWRRIMDELSVISCDLYRGYVRENKDFVPYFRSATPEQELGKLPLGSRPAKRRPTGGVESLRAIPWIFAWTQNRLMLPAWLGAGTALQKVVEDGKQSELEAMCRDWPFFSTRLGMLEMVFAKADLWLAEYYDQRLVDKTLWPLGKELRNLQEEDIKVVLAIANDSHLMADLPWIAESIQLRNIYTDPLNVLQAELLHRSRQAEKEGQEPDPRVEQALMVTIAGIAAGMRNTG</sequence>
<feature type="chain" id="PRO_1000129826" description="Phosphoenolpyruvate carboxylase">
    <location>
        <begin position="1"/>
        <end position="883"/>
    </location>
</feature>
<feature type="active site" evidence="1">
    <location>
        <position position="138"/>
    </location>
</feature>
<feature type="active site" evidence="1">
    <location>
        <position position="546"/>
    </location>
</feature>
<protein>
    <recommendedName>
        <fullName evidence="1">Phosphoenolpyruvate carboxylase</fullName>
        <shortName evidence="1">PEPC</shortName>
        <shortName evidence="1">PEPCase</shortName>
        <ecNumber evidence="1">4.1.1.31</ecNumber>
    </recommendedName>
</protein>
<proteinExistence type="inferred from homology"/>
<accession>B5Z058</accession>
<gene>
    <name evidence="1" type="primary">ppc</name>
    <name type="ordered locus">ECH74115_5416</name>
</gene>
<dbReference type="EC" id="4.1.1.31" evidence="1"/>
<dbReference type="EMBL" id="CP001164">
    <property type="protein sequence ID" value="ACI36605.1"/>
    <property type="molecule type" value="Genomic_DNA"/>
</dbReference>
<dbReference type="RefSeq" id="WP_001005582.1">
    <property type="nucleotide sequence ID" value="NC_011353.1"/>
</dbReference>
<dbReference type="SMR" id="B5Z058"/>
<dbReference type="KEGG" id="ecf:ECH74115_5416"/>
<dbReference type="HOGENOM" id="CLU_006557_2_0_6"/>
<dbReference type="GO" id="GO:0005829">
    <property type="term" value="C:cytosol"/>
    <property type="evidence" value="ECO:0007669"/>
    <property type="project" value="TreeGrafter"/>
</dbReference>
<dbReference type="GO" id="GO:0000287">
    <property type="term" value="F:magnesium ion binding"/>
    <property type="evidence" value="ECO:0007669"/>
    <property type="project" value="UniProtKB-UniRule"/>
</dbReference>
<dbReference type="GO" id="GO:0008964">
    <property type="term" value="F:phosphoenolpyruvate carboxylase activity"/>
    <property type="evidence" value="ECO:0007669"/>
    <property type="project" value="UniProtKB-UniRule"/>
</dbReference>
<dbReference type="GO" id="GO:0015977">
    <property type="term" value="P:carbon fixation"/>
    <property type="evidence" value="ECO:0007669"/>
    <property type="project" value="UniProtKB-UniRule"/>
</dbReference>
<dbReference type="GO" id="GO:0006107">
    <property type="term" value="P:oxaloacetate metabolic process"/>
    <property type="evidence" value="ECO:0007669"/>
    <property type="project" value="UniProtKB-UniRule"/>
</dbReference>
<dbReference type="GO" id="GO:0006099">
    <property type="term" value="P:tricarboxylic acid cycle"/>
    <property type="evidence" value="ECO:0007669"/>
    <property type="project" value="InterPro"/>
</dbReference>
<dbReference type="FunFam" id="1.20.1440.90:FF:000002">
    <property type="entry name" value="Phosphoenolpyruvate carboxylase"/>
    <property type="match status" value="1"/>
</dbReference>
<dbReference type="Gene3D" id="1.20.1440.90">
    <property type="entry name" value="Phosphoenolpyruvate/pyruvate domain"/>
    <property type="match status" value="1"/>
</dbReference>
<dbReference type="HAMAP" id="MF_00595">
    <property type="entry name" value="PEPcase_type1"/>
    <property type="match status" value="1"/>
</dbReference>
<dbReference type="InterPro" id="IPR021135">
    <property type="entry name" value="PEP_COase"/>
</dbReference>
<dbReference type="InterPro" id="IPR022805">
    <property type="entry name" value="PEP_COase_bac/pln-type"/>
</dbReference>
<dbReference type="InterPro" id="IPR018129">
    <property type="entry name" value="PEP_COase_Lys_AS"/>
</dbReference>
<dbReference type="InterPro" id="IPR033129">
    <property type="entry name" value="PEPCASE_His_AS"/>
</dbReference>
<dbReference type="InterPro" id="IPR015813">
    <property type="entry name" value="Pyrv/PenolPyrv_kinase-like_dom"/>
</dbReference>
<dbReference type="NCBIfam" id="NF000584">
    <property type="entry name" value="PRK00009.1"/>
    <property type="match status" value="1"/>
</dbReference>
<dbReference type="PANTHER" id="PTHR30523">
    <property type="entry name" value="PHOSPHOENOLPYRUVATE CARBOXYLASE"/>
    <property type="match status" value="1"/>
</dbReference>
<dbReference type="PANTHER" id="PTHR30523:SF6">
    <property type="entry name" value="PHOSPHOENOLPYRUVATE CARBOXYLASE"/>
    <property type="match status" value="1"/>
</dbReference>
<dbReference type="Pfam" id="PF00311">
    <property type="entry name" value="PEPcase"/>
    <property type="match status" value="1"/>
</dbReference>
<dbReference type="PRINTS" id="PR00150">
    <property type="entry name" value="PEPCARBXLASE"/>
</dbReference>
<dbReference type="SUPFAM" id="SSF51621">
    <property type="entry name" value="Phosphoenolpyruvate/pyruvate domain"/>
    <property type="match status" value="1"/>
</dbReference>
<dbReference type="PROSITE" id="PS00781">
    <property type="entry name" value="PEPCASE_1"/>
    <property type="match status" value="1"/>
</dbReference>
<dbReference type="PROSITE" id="PS00393">
    <property type="entry name" value="PEPCASE_2"/>
    <property type="match status" value="1"/>
</dbReference>
<organism>
    <name type="scientific">Escherichia coli O157:H7 (strain EC4115 / EHEC)</name>
    <dbReference type="NCBI Taxonomy" id="444450"/>
    <lineage>
        <taxon>Bacteria</taxon>
        <taxon>Pseudomonadati</taxon>
        <taxon>Pseudomonadota</taxon>
        <taxon>Gammaproteobacteria</taxon>
        <taxon>Enterobacterales</taxon>
        <taxon>Enterobacteriaceae</taxon>
        <taxon>Escherichia</taxon>
    </lineage>
</organism>
<reference key="1">
    <citation type="journal article" date="2011" name="Proc. Natl. Acad. Sci. U.S.A.">
        <title>Genomic anatomy of Escherichia coli O157:H7 outbreaks.</title>
        <authorList>
            <person name="Eppinger M."/>
            <person name="Mammel M.K."/>
            <person name="Leclerc J.E."/>
            <person name="Ravel J."/>
            <person name="Cebula T.A."/>
        </authorList>
    </citation>
    <scope>NUCLEOTIDE SEQUENCE [LARGE SCALE GENOMIC DNA]</scope>
    <source>
        <strain>EC4115 / EHEC</strain>
    </source>
</reference>
<name>CAPP_ECO5E</name>
<keyword id="KW-0120">Carbon dioxide fixation</keyword>
<keyword id="KW-0456">Lyase</keyword>
<keyword id="KW-0460">Magnesium</keyword>
<comment type="function">
    <text evidence="1">Forms oxaloacetate, a four-carbon dicarboxylic acid source for the tricarboxylic acid cycle.</text>
</comment>
<comment type="catalytic activity">
    <reaction evidence="1">
        <text>oxaloacetate + phosphate = phosphoenolpyruvate + hydrogencarbonate</text>
        <dbReference type="Rhea" id="RHEA:28370"/>
        <dbReference type="ChEBI" id="CHEBI:16452"/>
        <dbReference type="ChEBI" id="CHEBI:17544"/>
        <dbReference type="ChEBI" id="CHEBI:43474"/>
        <dbReference type="ChEBI" id="CHEBI:58702"/>
        <dbReference type="EC" id="4.1.1.31"/>
    </reaction>
</comment>
<comment type="cofactor">
    <cofactor evidence="1">
        <name>Mg(2+)</name>
        <dbReference type="ChEBI" id="CHEBI:18420"/>
    </cofactor>
</comment>
<comment type="similarity">
    <text evidence="1">Belongs to the PEPCase type 1 family.</text>
</comment>
<evidence type="ECO:0000255" key="1">
    <source>
        <dbReference type="HAMAP-Rule" id="MF_00595"/>
    </source>
</evidence>